<gene>
    <name type="primary">nnhA</name>
</gene>
<accession>F4ZCI3</accession>
<reference key="1">
    <citation type="journal article" date="2011" name="Environ. Microbiol.">
        <title>Catabolic pathway for 2-nitroimidazole involves a novel nitrohydrolase that also confers drug resistance.</title>
        <authorList>
            <person name="Qu Y."/>
            <person name="Spain J.C."/>
        </authorList>
    </citation>
    <scope>NUCLEOTIDE SEQUENCE [GENOMIC DNA]</scope>
    <scope>FUNCTION</scope>
    <scope>CATALYTIC ACTIVITY</scope>
    <scope>BIOPHYSICOCHEMICAL PROPERTIES</scope>
    <scope>SUBSTRATE SPECIFICITY</scope>
    <scope>NOMENCLATURE</scope>
</reference>
<sequence>MTTVDKRPSSRGYGDWRLSDIPQYKDGISTYEFVRATHEADYRTHQAEPVAGRTFGFNGIGRLTEVALHMPTKYTLHDQSSQYKESPSFFQGLMGVPDRGPVDLAAFQRETEELATAFENNGIKVHWVDYPEEPANPYGPLMGHVFLSWGSIWRGGSVISRFGFLPGMVGVSEYLAKWAWNTLNIPPLVAITEGAMEPGACNMIADEVLVTCLSASYDQRGTDQLVAAISKTSGTEEFHNLQLRPAVEGFFNKATGACAHPDININAIDVGKLVVSPAALDWDARTWLYDNNFELIEADPDEQREFLAPCNVLLLEPGKVIAHADCHKTNQKIRDAGVEVIEVTGTEIRKACGGIKCRVMQINREPGPTLADVRNRVWR</sequence>
<protein>
    <recommendedName>
        <fullName>2-nitroimidazole nitrohydrolase</fullName>
        <shortName>2NI nitrohydrolase</shortName>
        <ecNumber>3.5.99.9</ecNumber>
    </recommendedName>
</protein>
<name>NNHA_MYCS0</name>
<proteinExistence type="evidence at protein level"/>
<organism>
    <name type="scientific">Mycobacterium sp. (strain JS330)</name>
    <dbReference type="NCBI Taxonomy" id="1004011"/>
    <lineage>
        <taxon>Bacteria</taxon>
        <taxon>Bacillati</taxon>
        <taxon>Actinomycetota</taxon>
        <taxon>Actinomycetes</taxon>
        <taxon>Mycobacteriales</taxon>
        <taxon>Mycobacteriaceae</taxon>
        <taxon>Mycobacterium</taxon>
    </lineage>
</organism>
<dbReference type="EC" id="3.5.99.9"/>
<dbReference type="EMBL" id="HM538831">
    <property type="protein sequence ID" value="AEB33883.1"/>
    <property type="molecule type" value="Genomic_DNA"/>
</dbReference>
<dbReference type="PDB" id="9AZG">
    <property type="method" value="X-ray"/>
    <property type="resolution" value="2.16 A"/>
    <property type="chains" value="A=1-379"/>
</dbReference>
<dbReference type="PDB" id="9AZH">
    <property type="method" value="X-ray"/>
    <property type="resolution" value="2.04 A"/>
    <property type="chains" value="A/B/C/D/E/F=1-379"/>
</dbReference>
<dbReference type="PDB" id="9B01">
    <property type="method" value="X-ray"/>
    <property type="resolution" value="1.99 A"/>
    <property type="chains" value="A=1-379"/>
</dbReference>
<dbReference type="PDB" id="9B02">
    <property type="method" value="X-ray"/>
    <property type="resolution" value="1.97 A"/>
    <property type="chains" value="A=1-379"/>
</dbReference>
<dbReference type="PDBsum" id="9AZG"/>
<dbReference type="PDBsum" id="9AZH"/>
<dbReference type="PDBsum" id="9B01"/>
<dbReference type="PDBsum" id="9B02"/>
<dbReference type="SASBDB" id="F4ZCI3"/>
<dbReference type="SMR" id="F4ZCI3"/>
<dbReference type="KEGG" id="ag:AEB33883"/>
<dbReference type="BioCyc" id="MetaCyc:MONOMER-17531"/>
<dbReference type="BRENDA" id="3.5.99.9">
    <property type="organism ID" value="3490"/>
</dbReference>
<dbReference type="GO" id="GO:0016990">
    <property type="term" value="F:arginine deiminase activity"/>
    <property type="evidence" value="ECO:0007669"/>
    <property type="project" value="TreeGrafter"/>
</dbReference>
<dbReference type="GO" id="GO:0016818">
    <property type="term" value="F:hydrolase activity, acting on acid anhydrides, in phosphorus-containing anhydrides"/>
    <property type="evidence" value="ECO:0000314"/>
    <property type="project" value="UniProtKB"/>
</dbReference>
<dbReference type="GO" id="GO:0016810">
    <property type="term" value="F:hydrolase activity, acting on carbon-nitrogen (but not peptide) bonds"/>
    <property type="evidence" value="ECO:0000314"/>
    <property type="project" value="UniProtKB"/>
</dbReference>
<dbReference type="GO" id="GO:0019546">
    <property type="term" value="P:arginine deiminase pathway"/>
    <property type="evidence" value="ECO:0007669"/>
    <property type="project" value="TreeGrafter"/>
</dbReference>
<dbReference type="GO" id="GO:0052804">
    <property type="term" value="P:nitroimidazole catabolic process"/>
    <property type="evidence" value="ECO:0000314"/>
    <property type="project" value="UniProtKB"/>
</dbReference>
<dbReference type="GO" id="GO:0046677">
    <property type="term" value="P:response to antibiotic"/>
    <property type="evidence" value="ECO:0007669"/>
    <property type="project" value="UniProtKB-KW"/>
</dbReference>
<dbReference type="FunFam" id="3.75.10.10:FF:000015">
    <property type="entry name" value="2-nitroimidazole nitrohydrolase"/>
    <property type="match status" value="1"/>
</dbReference>
<dbReference type="Gene3D" id="3.75.10.10">
    <property type="entry name" value="L-arginine/glycine Amidinotransferase, Chain A"/>
    <property type="match status" value="1"/>
</dbReference>
<dbReference type="PANTHER" id="PTHR47271">
    <property type="entry name" value="ARGININE DEIMINASE"/>
    <property type="match status" value="1"/>
</dbReference>
<dbReference type="PANTHER" id="PTHR47271:SF2">
    <property type="entry name" value="ARGININE DEIMINASE"/>
    <property type="match status" value="1"/>
</dbReference>
<dbReference type="Pfam" id="PF02274">
    <property type="entry name" value="ADI"/>
    <property type="match status" value="1"/>
</dbReference>
<dbReference type="SUPFAM" id="SSF55909">
    <property type="entry name" value="Pentein"/>
    <property type="match status" value="1"/>
</dbReference>
<comment type="function">
    <text evidence="2">Involved in the biodegradation of 2-Nitroimidazole (2NI) which is a natural antibiotic and an analog of the synthetic nitroimidazoles used for treatment of tuberculosis, Chagas disease (also called American Trypanosomiasis) and cancer. Catalyzes the hydrolytic denitration of 2NI to produce imidazol-2-one and nitrite. It is also active against the 2NI synthetic derivative benznidazole. NnhA confers drug resistance to 2NI.</text>
</comment>
<comment type="catalytic activity">
    <reaction evidence="2">
        <text>2-nitroimidazole + H2O = 1,3-dihydro-2H-imidazol-2-one + nitrite + H(+)</text>
        <dbReference type="Rhea" id="RHEA:34271"/>
        <dbReference type="ChEBI" id="CHEBI:15377"/>
        <dbReference type="ChEBI" id="CHEBI:15378"/>
        <dbReference type="ChEBI" id="CHEBI:16301"/>
        <dbReference type="ChEBI" id="CHEBI:51022"/>
        <dbReference type="ChEBI" id="CHEBI:67135"/>
        <dbReference type="EC" id="3.5.99.9"/>
    </reaction>
</comment>
<comment type="biophysicochemical properties">
    <phDependence>
        <text evidence="2">Optimum pH is 7.2.</text>
    </phDependence>
    <temperatureDependence>
        <text evidence="2">Optimum temperature is 24 degrees Celsius.</text>
    </temperatureDependence>
</comment>
<comment type="similarity">
    <text evidence="3">Belongs to the arginine deiminase family.</text>
</comment>
<keyword id="KW-0002">3D-structure</keyword>
<keyword id="KW-0046">Antibiotic resistance</keyword>
<keyword id="KW-0378">Hydrolase</keyword>
<feature type="chain" id="PRO_0000422782" description="2-nitroimidazole nitrohydrolase">
    <location>
        <begin position="1"/>
        <end position="379"/>
    </location>
</feature>
<feature type="active site" description="Amidino-cysteine intermediate" evidence="1">
    <location>
        <position position="357"/>
    </location>
</feature>
<evidence type="ECO:0000250" key="1"/>
<evidence type="ECO:0000269" key="2">
    <source>
    </source>
</evidence>
<evidence type="ECO:0000305" key="3"/>